<keyword id="KW-0010">Activator</keyword>
<keyword id="KW-0175">Coiled coil</keyword>
<keyword id="KW-0217">Developmental protein</keyword>
<keyword id="KW-0221">Differentiation</keyword>
<keyword id="KW-0238">DNA-binding</keyword>
<keyword id="KW-0287">Flowering</keyword>
<keyword id="KW-0539">Nucleus</keyword>
<keyword id="KW-1185">Reference proteome</keyword>
<keyword id="KW-0804">Transcription</keyword>
<keyword id="KW-0805">Transcription regulation</keyword>
<proteinExistence type="inferred from homology"/>
<evidence type="ECO:0000250" key="1"/>
<evidence type="ECO:0000255" key="2">
    <source>
        <dbReference type="PROSITE-ProRule" id="PRU00251"/>
    </source>
</evidence>
<evidence type="ECO:0000255" key="3">
    <source>
        <dbReference type="PROSITE-ProRule" id="PRU00629"/>
    </source>
</evidence>
<evidence type="ECO:0000256" key="4">
    <source>
        <dbReference type="SAM" id="MobiDB-lite"/>
    </source>
</evidence>
<sequence>MGRGRVQLKRIENKINRQVTFSKRRAGLLKKAHEISVLCDAEVALVVFSHKGKLFEYSTDSCMEKILERYERYSYAERQLIAPESDVNTNWSMEYNRLKAKIELLERNQRHYLGEDLNAMSPKELQNLEQQLDTALKHIRTRKNQLMYESINELQRKEKAIQEQNSMLSKQIKEREKILRAQQEQWDQQNHGHNMPPPPPPQQHQIQHPYMLSHQPSPFLNMGGLYQEEDPMAMRRNELELTLEPVYNCNLGCFAA</sequence>
<reference key="1">
    <citation type="journal article" date="2011" name="Nat. Genet.">
        <title>The Arabidopsis lyrata genome sequence and the basis of rapid genome size change.</title>
        <authorList>
            <person name="Hu T.T."/>
            <person name="Pattyn P."/>
            <person name="Bakker E.G."/>
            <person name="Cao J."/>
            <person name="Cheng J.-F."/>
            <person name="Clark R.M."/>
            <person name="Fahlgren N."/>
            <person name="Fawcett J.A."/>
            <person name="Grimwood J."/>
            <person name="Gundlach H."/>
            <person name="Haberer G."/>
            <person name="Hollister J.D."/>
            <person name="Ossowski S."/>
            <person name="Ottilar R.P."/>
            <person name="Salamov A.A."/>
            <person name="Schneeberger K."/>
            <person name="Spannagl M."/>
            <person name="Wang X."/>
            <person name="Yang L."/>
            <person name="Nasrallah M.E."/>
            <person name="Bergelson J."/>
            <person name="Carrington J.C."/>
            <person name="Gaut B.S."/>
            <person name="Schmutz J."/>
            <person name="Mayer K.F.X."/>
            <person name="Van de Peer Y."/>
            <person name="Grigoriev I.V."/>
            <person name="Nordborg M."/>
            <person name="Weigel D."/>
            <person name="Guo Y.-L."/>
        </authorList>
    </citation>
    <scope>NUCLEOTIDE SEQUENCE [LARGE SCALE GENOMIC DNA]</scope>
    <source>
        <strain>cv. MN47</strain>
    </source>
</reference>
<organism>
    <name type="scientific">Arabidopsis lyrata subsp. lyrata</name>
    <name type="common">Lyre-leaved rock-cress</name>
    <dbReference type="NCBI Taxonomy" id="81972"/>
    <lineage>
        <taxon>Eukaryota</taxon>
        <taxon>Viridiplantae</taxon>
        <taxon>Streptophyta</taxon>
        <taxon>Embryophyta</taxon>
        <taxon>Tracheophyta</taxon>
        <taxon>Spermatophyta</taxon>
        <taxon>Magnoliopsida</taxon>
        <taxon>eudicotyledons</taxon>
        <taxon>Gunneridae</taxon>
        <taxon>Pentapetalae</taxon>
        <taxon>rosids</taxon>
        <taxon>malvids</taxon>
        <taxon>Brassicales</taxon>
        <taxon>Brassicaceae</taxon>
        <taxon>Camelineae</taxon>
        <taxon>Arabidopsis</taxon>
    </lineage>
</organism>
<accession>D7KWY6</accession>
<name>AP1_ARALL</name>
<gene>
    <name type="primary">AP1</name>
    <name type="ORF">ARALYDRAFT_476039</name>
</gene>
<protein>
    <recommendedName>
        <fullName>Floral homeotic protein APETALA 1</fullName>
    </recommendedName>
    <alternativeName>
        <fullName>Agamous-like MADS-box protein AP1</fullName>
    </alternativeName>
</protein>
<comment type="function">
    <text evidence="1">Transcription factor that promotes early floral meristem identity in synergy with LEAFY. Displays a redundant function with CAULIFLOWER in the up-regulation of LEAFY. Required subsequently for the transition of an inflorescence meristem into a floral meristem, and for the normal development of sepals and petals in flowers. Regulates positively B class homeotic proteins (By similarity).</text>
</comment>
<comment type="subunit">
    <text evidence="1">Homodimer capable of binding to CArG-box sequences.</text>
</comment>
<comment type="subcellular location">
    <subcellularLocation>
        <location evidence="2">Nucleus</location>
    </subcellularLocation>
</comment>
<feature type="chain" id="PRO_0000417129" description="Floral homeotic protein APETALA 1">
    <location>
        <begin position="1"/>
        <end position="256"/>
    </location>
</feature>
<feature type="domain" description="MADS-box" evidence="2">
    <location>
        <begin position="1"/>
        <end position="61"/>
    </location>
</feature>
<feature type="domain" description="K-box" evidence="3">
    <location>
        <begin position="88"/>
        <end position="178"/>
    </location>
</feature>
<feature type="region of interest" description="Disordered" evidence="4">
    <location>
        <begin position="184"/>
        <end position="206"/>
    </location>
</feature>
<dbReference type="EMBL" id="GL348714">
    <property type="protein sequence ID" value="EFH64962.1"/>
    <property type="molecule type" value="Genomic_DNA"/>
</dbReference>
<dbReference type="RefSeq" id="XP_002888703.1">
    <property type="nucleotide sequence ID" value="XM_002888657.1"/>
</dbReference>
<dbReference type="SMR" id="D7KWY6"/>
<dbReference type="STRING" id="81972.D7KWY6"/>
<dbReference type="EnsemblPlants" id="fgenesh2_kg.2__1169__AT1G69120.1">
    <property type="protein sequence ID" value="fgenesh2_kg.2__1169__AT1G69120.1"/>
    <property type="gene ID" value="fgenesh2_kg.2__1169__AT1G69120.1"/>
</dbReference>
<dbReference type="Gramene" id="fgenesh2_kg.2__1169__AT1G69120.1">
    <property type="protein sequence ID" value="fgenesh2_kg.2__1169__AT1G69120.1"/>
    <property type="gene ID" value="fgenesh2_kg.2__1169__AT1G69120.1"/>
</dbReference>
<dbReference type="eggNOG" id="KOG0014">
    <property type="taxonomic scope" value="Eukaryota"/>
</dbReference>
<dbReference type="HOGENOM" id="CLU_053053_0_2_1"/>
<dbReference type="OrthoDB" id="1898716at2759"/>
<dbReference type="Proteomes" id="UP000008694">
    <property type="component" value="Unassembled WGS sequence"/>
</dbReference>
<dbReference type="GO" id="GO:0005634">
    <property type="term" value="C:nucleus"/>
    <property type="evidence" value="ECO:0007669"/>
    <property type="project" value="UniProtKB-SubCell"/>
</dbReference>
<dbReference type="GO" id="GO:0003700">
    <property type="term" value="F:DNA-binding transcription factor activity"/>
    <property type="evidence" value="ECO:0007669"/>
    <property type="project" value="InterPro"/>
</dbReference>
<dbReference type="GO" id="GO:0046982">
    <property type="term" value="F:protein heterodimerization activity"/>
    <property type="evidence" value="ECO:0007669"/>
    <property type="project" value="EnsemblPlants"/>
</dbReference>
<dbReference type="GO" id="GO:0000977">
    <property type="term" value="F:RNA polymerase II transcription regulatory region sequence-specific DNA binding"/>
    <property type="evidence" value="ECO:0007669"/>
    <property type="project" value="InterPro"/>
</dbReference>
<dbReference type="GO" id="GO:0030154">
    <property type="term" value="P:cell differentiation"/>
    <property type="evidence" value="ECO:0007669"/>
    <property type="project" value="UniProtKB-KW"/>
</dbReference>
<dbReference type="GO" id="GO:0010582">
    <property type="term" value="P:floral meristem determinacy"/>
    <property type="evidence" value="ECO:0007669"/>
    <property type="project" value="EnsemblPlants"/>
</dbReference>
<dbReference type="GO" id="GO:0009933">
    <property type="term" value="P:meristem structural organization"/>
    <property type="evidence" value="ECO:0007669"/>
    <property type="project" value="EnsemblPlants"/>
</dbReference>
<dbReference type="GO" id="GO:0045944">
    <property type="term" value="P:positive regulation of transcription by RNA polymerase II"/>
    <property type="evidence" value="ECO:0007669"/>
    <property type="project" value="InterPro"/>
</dbReference>
<dbReference type="CDD" id="cd00265">
    <property type="entry name" value="MADS_MEF2_like"/>
    <property type="match status" value="1"/>
</dbReference>
<dbReference type="FunFam" id="3.40.1810.10:FF:000003">
    <property type="entry name" value="MADS-box transcription factor MADS-MC"/>
    <property type="match status" value="1"/>
</dbReference>
<dbReference type="Gene3D" id="3.40.1810.10">
    <property type="entry name" value="Transcription factor, MADS-box"/>
    <property type="match status" value="1"/>
</dbReference>
<dbReference type="InterPro" id="IPR050142">
    <property type="entry name" value="MADS-box/MEF2_TF"/>
</dbReference>
<dbReference type="InterPro" id="IPR033896">
    <property type="entry name" value="MEF2-like_N"/>
</dbReference>
<dbReference type="InterPro" id="IPR002487">
    <property type="entry name" value="TF_Kbox"/>
</dbReference>
<dbReference type="InterPro" id="IPR002100">
    <property type="entry name" value="TF_MADSbox"/>
</dbReference>
<dbReference type="InterPro" id="IPR036879">
    <property type="entry name" value="TF_MADSbox_sf"/>
</dbReference>
<dbReference type="PANTHER" id="PTHR48019">
    <property type="entry name" value="SERUM RESPONSE FACTOR HOMOLOG"/>
    <property type="match status" value="1"/>
</dbReference>
<dbReference type="Pfam" id="PF01486">
    <property type="entry name" value="K-box"/>
    <property type="match status" value="1"/>
</dbReference>
<dbReference type="Pfam" id="PF00319">
    <property type="entry name" value="SRF-TF"/>
    <property type="match status" value="1"/>
</dbReference>
<dbReference type="PRINTS" id="PR00404">
    <property type="entry name" value="MADSDOMAIN"/>
</dbReference>
<dbReference type="SMART" id="SM00432">
    <property type="entry name" value="MADS"/>
    <property type="match status" value="1"/>
</dbReference>
<dbReference type="SUPFAM" id="SSF55455">
    <property type="entry name" value="SRF-like"/>
    <property type="match status" value="1"/>
</dbReference>
<dbReference type="PROSITE" id="PS51297">
    <property type="entry name" value="K_BOX"/>
    <property type="match status" value="1"/>
</dbReference>
<dbReference type="PROSITE" id="PS00350">
    <property type="entry name" value="MADS_BOX_1"/>
    <property type="match status" value="1"/>
</dbReference>
<dbReference type="PROSITE" id="PS50066">
    <property type="entry name" value="MADS_BOX_2"/>
    <property type="match status" value="1"/>
</dbReference>